<dbReference type="EMBL" id="AE005174">
    <property type="protein sequence ID" value="AAG58314.1"/>
    <property type="molecule type" value="Genomic_DNA"/>
</dbReference>
<dbReference type="EMBL" id="BA000007">
    <property type="protein sequence ID" value="BAB37482.1"/>
    <property type="molecule type" value="Genomic_DNA"/>
</dbReference>
<dbReference type="PIR" id="C91136">
    <property type="entry name" value="C91136"/>
</dbReference>
<dbReference type="PIR" id="F85981">
    <property type="entry name" value="F85981"/>
</dbReference>
<dbReference type="RefSeq" id="NP_312086.1">
    <property type="nucleotide sequence ID" value="NC_002695.1"/>
</dbReference>
<dbReference type="RefSeq" id="WP_001054420.1">
    <property type="nucleotide sequence ID" value="NZ_VOAI01000014.1"/>
</dbReference>
<dbReference type="SMR" id="P0AGK6"/>
<dbReference type="STRING" id="155864.Z4542"/>
<dbReference type="GeneID" id="916097"/>
<dbReference type="GeneID" id="93778801"/>
<dbReference type="KEGG" id="ece:Z4542"/>
<dbReference type="KEGG" id="ecs:ECs_4059"/>
<dbReference type="PATRIC" id="fig|386585.9.peg.4238"/>
<dbReference type="eggNOG" id="COG1534">
    <property type="taxonomic scope" value="Bacteria"/>
</dbReference>
<dbReference type="HOGENOM" id="CLU_095994_2_0_6"/>
<dbReference type="OMA" id="KMALIYR"/>
<dbReference type="Proteomes" id="UP000000558">
    <property type="component" value="Chromosome"/>
</dbReference>
<dbReference type="Proteomes" id="UP000002519">
    <property type="component" value="Chromosome"/>
</dbReference>
<dbReference type="GO" id="GO:0003723">
    <property type="term" value="F:RNA binding"/>
    <property type="evidence" value="ECO:0007669"/>
    <property type="project" value="UniProtKB-KW"/>
</dbReference>
<dbReference type="FunFam" id="3.30.110.60:FF:000001">
    <property type="entry name" value="RNA-binding protein YhbY"/>
    <property type="match status" value="1"/>
</dbReference>
<dbReference type="Gene3D" id="3.30.110.60">
    <property type="entry name" value="YhbY-like"/>
    <property type="match status" value="1"/>
</dbReference>
<dbReference type="InterPro" id="IPR001890">
    <property type="entry name" value="RNA-binding_CRM"/>
</dbReference>
<dbReference type="InterPro" id="IPR051925">
    <property type="entry name" value="RNA-binding_domain"/>
</dbReference>
<dbReference type="InterPro" id="IPR017924">
    <property type="entry name" value="RNA-binding_YhbY"/>
</dbReference>
<dbReference type="InterPro" id="IPR035920">
    <property type="entry name" value="YhbY-like_sf"/>
</dbReference>
<dbReference type="NCBIfam" id="NF007669">
    <property type="entry name" value="PRK10343.1"/>
    <property type="match status" value="1"/>
</dbReference>
<dbReference type="NCBIfam" id="TIGR00253">
    <property type="entry name" value="RNA_bind_YhbY"/>
    <property type="match status" value="1"/>
</dbReference>
<dbReference type="PANTHER" id="PTHR40065">
    <property type="entry name" value="RNA-BINDING PROTEIN YHBY"/>
    <property type="match status" value="1"/>
</dbReference>
<dbReference type="PANTHER" id="PTHR40065:SF3">
    <property type="entry name" value="RNA-BINDING PROTEIN YHBY"/>
    <property type="match status" value="1"/>
</dbReference>
<dbReference type="Pfam" id="PF01985">
    <property type="entry name" value="CRS1_YhbY"/>
    <property type="match status" value="1"/>
</dbReference>
<dbReference type="SMART" id="SM01103">
    <property type="entry name" value="CRS1_YhbY"/>
    <property type="match status" value="1"/>
</dbReference>
<dbReference type="SUPFAM" id="SSF75471">
    <property type="entry name" value="YhbY-like"/>
    <property type="match status" value="1"/>
</dbReference>
<dbReference type="PROSITE" id="PS51295">
    <property type="entry name" value="CRM"/>
    <property type="match status" value="1"/>
</dbReference>
<evidence type="ECO:0000255" key="1">
    <source>
        <dbReference type="PROSITE-ProRule" id="PRU00626"/>
    </source>
</evidence>
<gene>
    <name type="primary">yhbY</name>
    <name type="ordered locus">Z4542</name>
    <name type="ordered locus">ECs4059</name>
</gene>
<proteinExistence type="predicted"/>
<accession>P0AGK6</accession>
<accession>P42550</accession>
<organism>
    <name type="scientific">Escherichia coli O157:H7</name>
    <dbReference type="NCBI Taxonomy" id="83334"/>
    <lineage>
        <taxon>Bacteria</taxon>
        <taxon>Pseudomonadati</taxon>
        <taxon>Pseudomonadota</taxon>
        <taxon>Gammaproteobacteria</taxon>
        <taxon>Enterobacterales</taxon>
        <taxon>Enterobacteriaceae</taxon>
        <taxon>Escherichia</taxon>
    </lineage>
</organism>
<sequence length="97" mass="10784">MNLSTKQKQHLKGLAHPLKPVVLLGSNGLTEGVLAEIEQALEHHELIKVKIATEDRETKTLIVEAIVRETGACNVQVIGKTLVLYRPTKERKISLPR</sequence>
<feature type="chain" id="PRO_0000202164" description="RNA-binding protein YhbY">
    <location>
        <begin position="1"/>
        <end position="97"/>
    </location>
</feature>
<feature type="domain" description="CRM" evidence="1">
    <location>
        <begin position="1"/>
        <end position="97"/>
    </location>
</feature>
<keyword id="KW-1185">Reference proteome</keyword>
<keyword id="KW-0694">RNA-binding</keyword>
<protein>
    <recommendedName>
        <fullName>RNA-binding protein YhbY</fullName>
    </recommendedName>
</protein>
<name>YHBY_ECO57</name>
<reference key="1">
    <citation type="journal article" date="2001" name="Nature">
        <title>Genome sequence of enterohaemorrhagic Escherichia coli O157:H7.</title>
        <authorList>
            <person name="Perna N.T."/>
            <person name="Plunkett G. III"/>
            <person name="Burland V."/>
            <person name="Mau B."/>
            <person name="Glasner J.D."/>
            <person name="Rose D.J."/>
            <person name="Mayhew G.F."/>
            <person name="Evans P.S."/>
            <person name="Gregor J."/>
            <person name="Kirkpatrick H.A."/>
            <person name="Posfai G."/>
            <person name="Hackett J."/>
            <person name="Klink S."/>
            <person name="Boutin A."/>
            <person name="Shao Y."/>
            <person name="Miller L."/>
            <person name="Grotbeck E.J."/>
            <person name="Davis N.W."/>
            <person name="Lim A."/>
            <person name="Dimalanta E.T."/>
            <person name="Potamousis K."/>
            <person name="Apodaca J."/>
            <person name="Anantharaman T.S."/>
            <person name="Lin J."/>
            <person name="Yen G."/>
            <person name="Schwartz D.C."/>
            <person name="Welch R.A."/>
            <person name="Blattner F.R."/>
        </authorList>
    </citation>
    <scope>NUCLEOTIDE SEQUENCE [LARGE SCALE GENOMIC DNA]</scope>
    <source>
        <strain>O157:H7 / EDL933 / ATCC 700927 / EHEC</strain>
    </source>
</reference>
<reference key="2">
    <citation type="journal article" date="2001" name="DNA Res.">
        <title>Complete genome sequence of enterohemorrhagic Escherichia coli O157:H7 and genomic comparison with a laboratory strain K-12.</title>
        <authorList>
            <person name="Hayashi T."/>
            <person name="Makino K."/>
            <person name="Ohnishi M."/>
            <person name="Kurokawa K."/>
            <person name="Ishii K."/>
            <person name="Yokoyama K."/>
            <person name="Han C.-G."/>
            <person name="Ohtsubo E."/>
            <person name="Nakayama K."/>
            <person name="Murata T."/>
            <person name="Tanaka M."/>
            <person name="Tobe T."/>
            <person name="Iida T."/>
            <person name="Takami H."/>
            <person name="Honda T."/>
            <person name="Sasakawa C."/>
            <person name="Ogasawara N."/>
            <person name="Yasunaga T."/>
            <person name="Kuhara S."/>
            <person name="Shiba T."/>
            <person name="Hattori M."/>
            <person name="Shinagawa H."/>
        </authorList>
    </citation>
    <scope>NUCLEOTIDE SEQUENCE [LARGE SCALE GENOMIC DNA]</scope>
    <source>
        <strain>O157:H7 / Sakai / RIMD 0509952 / EHEC</strain>
    </source>
</reference>